<keyword id="KW-0687">Ribonucleoprotein</keyword>
<keyword id="KW-0689">Ribosomal protein</keyword>
<accession>Q92IV4</accession>
<organism>
    <name type="scientific">Rickettsia conorii (strain ATCC VR-613 / Malish 7)</name>
    <dbReference type="NCBI Taxonomy" id="272944"/>
    <lineage>
        <taxon>Bacteria</taxon>
        <taxon>Pseudomonadati</taxon>
        <taxon>Pseudomonadota</taxon>
        <taxon>Alphaproteobacteria</taxon>
        <taxon>Rickettsiales</taxon>
        <taxon>Rickettsiaceae</taxon>
        <taxon>Rickettsieae</taxon>
        <taxon>Rickettsia</taxon>
        <taxon>spotted fever group</taxon>
    </lineage>
</organism>
<gene>
    <name evidence="1" type="primary">rpsI</name>
    <name type="ordered locus">RC0316</name>
</gene>
<comment type="similarity">
    <text evidence="1">Belongs to the universal ribosomal protein uS9 family.</text>
</comment>
<feature type="chain" id="PRO_0000111398" description="Small ribosomal subunit protein uS9">
    <location>
        <begin position="1"/>
        <end position="159"/>
    </location>
</feature>
<dbReference type="EMBL" id="AE006914">
    <property type="protein sequence ID" value="AAL02854.1"/>
    <property type="molecule type" value="Genomic_DNA"/>
</dbReference>
<dbReference type="PIR" id="D97739">
    <property type="entry name" value="D97739"/>
</dbReference>
<dbReference type="RefSeq" id="WP_010976974.1">
    <property type="nucleotide sequence ID" value="NC_003103.1"/>
</dbReference>
<dbReference type="SMR" id="Q92IV4"/>
<dbReference type="GeneID" id="928835"/>
<dbReference type="KEGG" id="rco:RC0316"/>
<dbReference type="PATRIC" id="fig|272944.4.peg.361"/>
<dbReference type="HOGENOM" id="CLU_046483_2_0_5"/>
<dbReference type="Proteomes" id="UP000000816">
    <property type="component" value="Chromosome"/>
</dbReference>
<dbReference type="GO" id="GO:0022627">
    <property type="term" value="C:cytosolic small ribosomal subunit"/>
    <property type="evidence" value="ECO:0007669"/>
    <property type="project" value="TreeGrafter"/>
</dbReference>
<dbReference type="GO" id="GO:0003723">
    <property type="term" value="F:RNA binding"/>
    <property type="evidence" value="ECO:0007669"/>
    <property type="project" value="TreeGrafter"/>
</dbReference>
<dbReference type="GO" id="GO:0003735">
    <property type="term" value="F:structural constituent of ribosome"/>
    <property type="evidence" value="ECO:0007669"/>
    <property type="project" value="InterPro"/>
</dbReference>
<dbReference type="GO" id="GO:0006412">
    <property type="term" value="P:translation"/>
    <property type="evidence" value="ECO:0007669"/>
    <property type="project" value="UniProtKB-UniRule"/>
</dbReference>
<dbReference type="FunFam" id="3.30.230.10:FF:000001">
    <property type="entry name" value="30S ribosomal protein S9"/>
    <property type="match status" value="1"/>
</dbReference>
<dbReference type="Gene3D" id="3.30.230.10">
    <property type="match status" value="1"/>
</dbReference>
<dbReference type="HAMAP" id="MF_00532_B">
    <property type="entry name" value="Ribosomal_uS9_B"/>
    <property type="match status" value="1"/>
</dbReference>
<dbReference type="InterPro" id="IPR020568">
    <property type="entry name" value="Ribosomal_Su5_D2-typ_SF"/>
</dbReference>
<dbReference type="InterPro" id="IPR000754">
    <property type="entry name" value="Ribosomal_uS9"/>
</dbReference>
<dbReference type="InterPro" id="IPR023035">
    <property type="entry name" value="Ribosomal_uS9_bac/plastid"/>
</dbReference>
<dbReference type="InterPro" id="IPR020574">
    <property type="entry name" value="Ribosomal_uS9_CS"/>
</dbReference>
<dbReference type="InterPro" id="IPR014721">
    <property type="entry name" value="Ribsml_uS5_D2-typ_fold_subgr"/>
</dbReference>
<dbReference type="NCBIfam" id="NF001099">
    <property type="entry name" value="PRK00132.1"/>
    <property type="match status" value="1"/>
</dbReference>
<dbReference type="PANTHER" id="PTHR21569">
    <property type="entry name" value="RIBOSOMAL PROTEIN S9"/>
    <property type="match status" value="1"/>
</dbReference>
<dbReference type="PANTHER" id="PTHR21569:SF1">
    <property type="entry name" value="SMALL RIBOSOMAL SUBUNIT PROTEIN US9M"/>
    <property type="match status" value="1"/>
</dbReference>
<dbReference type="Pfam" id="PF00380">
    <property type="entry name" value="Ribosomal_S9"/>
    <property type="match status" value="1"/>
</dbReference>
<dbReference type="SUPFAM" id="SSF54211">
    <property type="entry name" value="Ribosomal protein S5 domain 2-like"/>
    <property type="match status" value="1"/>
</dbReference>
<dbReference type="PROSITE" id="PS00360">
    <property type="entry name" value="RIBOSOMAL_S9"/>
    <property type="match status" value="1"/>
</dbReference>
<protein>
    <recommendedName>
        <fullName evidence="1">Small ribosomal subunit protein uS9</fullName>
    </recommendedName>
    <alternativeName>
        <fullName evidence="2">30S ribosomal protein S9</fullName>
    </alternativeName>
</protein>
<name>RS9_RICCN</name>
<evidence type="ECO:0000255" key="1">
    <source>
        <dbReference type="HAMAP-Rule" id="MF_00532"/>
    </source>
</evidence>
<evidence type="ECO:0000305" key="2"/>
<reference key="1">
    <citation type="journal article" date="2001" name="Science">
        <title>Mechanisms of evolution in Rickettsia conorii and R. prowazekii.</title>
        <authorList>
            <person name="Ogata H."/>
            <person name="Audic S."/>
            <person name="Renesto-Audiffren P."/>
            <person name="Fournier P.-E."/>
            <person name="Barbe V."/>
            <person name="Samson D."/>
            <person name="Roux V."/>
            <person name="Cossart P."/>
            <person name="Weissenbach J."/>
            <person name="Claverie J.-M."/>
            <person name="Raoult D."/>
        </authorList>
    </citation>
    <scope>NUCLEOTIDE SEQUENCE [LARGE SCALE GENOMIC DNA]</scope>
    <source>
        <strain>ATCC VR-613 / Malish 7</strain>
    </source>
</reference>
<proteinExistence type="inferred from homology"/>
<sequence length="159" mass="17967">MPELKIKTEKVEKQLTKEPLVLKTPKEQIDNLGKFYATGKRKNAIARVWLKVGKGKIVVNNKTIAQYFPSETYVKTILQPFVLTKTIDQYDIICTVRGGGISGQKGAILHGISKALDKSAPDFHAILRKGGLLTRDSRVVERKKYGQRKARKKTQFSKR</sequence>